<organism>
    <name type="scientific">Aix sponsa</name>
    <name type="common">Wood duck</name>
    <name type="synonym">Anas sponsa</name>
    <dbReference type="NCBI Taxonomy" id="8833"/>
    <lineage>
        <taxon>Eukaryota</taxon>
        <taxon>Metazoa</taxon>
        <taxon>Chordata</taxon>
        <taxon>Craniata</taxon>
        <taxon>Vertebrata</taxon>
        <taxon>Euteleostomi</taxon>
        <taxon>Archelosauria</taxon>
        <taxon>Archosauria</taxon>
        <taxon>Dinosauria</taxon>
        <taxon>Saurischia</taxon>
        <taxon>Theropoda</taxon>
        <taxon>Coelurosauria</taxon>
        <taxon>Aves</taxon>
        <taxon>Neognathae</taxon>
        <taxon>Galloanserae</taxon>
        <taxon>Anseriformes</taxon>
        <taxon>Anatidae</taxon>
        <taxon>Anatinae</taxon>
        <taxon>Aix</taxon>
    </lineage>
</organism>
<protein>
    <recommendedName>
        <fullName>Ovomucoid</fullName>
    </recommendedName>
</protein>
<reference key="1">
    <citation type="journal article" date="1987" name="Biochemistry">
        <title>Ovomucoid third domains from 100 avian species: isolation, sequences, and hypervariability of enzyme-inhibitor contact residues.</title>
        <authorList>
            <person name="Laskowski M. Jr."/>
            <person name="Kato I."/>
            <person name="Ardelt W."/>
            <person name="Cook J."/>
            <person name="Denton A."/>
            <person name="Empie M.W."/>
            <person name="Kohr W.J."/>
            <person name="Park S.J."/>
            <person name="Parks K."/>
            <person name="Schatzley B.L."/>
            <person name="Schoenberger O.L."/>
            <person name="Tashiro M."/>
            <person name="Vichot G."/>
            <person name="Whatley H.E."/>
            <person name="Wieczorek A."/>
            <person name="Wieczorek M."/>
        </authorList>
    </citation>
    <scope>PROTEIN SEQUENCE</scope>
</reference>
<accession>P68145</accession>
<accession>P05576</accession>
<comment type="subcellular location">
    <subcellularLocation>
        <location>Secreted</location>
    </subcellularLocation>
</comment>
<comment type="domain">
    <text>Avian ovomucoid consists of three homologous, tandem Kazal family inhibitory domains.</text>
</comment>
<sequence>VATVDCSGYPKPACTMEYMPLCGSDNKTYGNKCNFCNAVVDSNGTLTLSHFGEC</sequence>
<dbReference type="PIR" id="A31447">
    <property type="entry name" value="A31447"/>
</dbReference>
<dbReference type="SMR" id="P68145"/>
<dbReference type="GO" id="GO:0005576">
    <property type="term" value="C:extracellular region"/>
    <property type="evidence" value="ECO:0007669"/>
    <property type="project" value="UniProtKB-SubCell"/>
</dbReference>
<dbReference type="GO" id="GO:0004867">
    <property type="term" value="F:serine-type endopeptidase inhibitor activity"/>
    <property type="evidence" value="ECO:0007669"/>
    <property type="project" value="UniProtKB-KW"/>
</dbReference>
<dbReference type="CDD" id="cd00104">
    <property type="entry name" value="KAZAL_FS"/>
    <property type="match status" value="1"/>
</dbReference>
<dbReference type="FunFam" id="3.30.60.30:FF:000037">
    <property type="entry name" value="Ovomucoid"/>
    <property type="match status" value="1"/>
</dbReference>
<dbReference type="Gene3D" id="3.30.60.30">
    <property type="match status" value="1"/>
</dbReference>
<dbReference type="InterPro" id="IPR051597">
    <property type="entry name" value="Bifunctional_prot_inhibitor"/>
</dbReference>
<dbReference type="InterPro" id="IPR002350">
    <property type="entry name" value="Kazal_dom"/>
</dbReference>
<dbReference type="InterPro" id="IPR036058">
    <property type="entry name" value="Kazal_dom_sf"/>
</dbReference>
<dbReference type="InterPro" id="IPR001239">
    <property type="entry name" value="Prot_inh_Kazal-m"/>
</dbReference>
<dbReference type="PANTHER" id="PTHR47729:SF1">
    <property type="entry name" value="OVOMUCOID-LIKE-RELATED"/>
    <property type="match status" value="1"/>
</dbReference>
<dbReference type="PANTHER" id="PTHR47729">
    <property type="entry name" value="SERINE PEPTIDASE INHIBITOR, KAZAL TYPE 2, TANDEM DUPLICATE 1-RELATED"/>
    <property type="match status" value="1"/>
</dbReference>
<dbReference type="Pfam" id="PF00050">
    <property type="entry name" value="Kazal_1"/>
    <property type="match status" value="1"/>
</dbReference>
<dbReference type="PRINTS" id="PR00290">
    <property type="entry name" value="KAZALINHBTR"/>
</dbReference>
<dbReference type="SMART" id="SM00280">
    <property type="entry name" value="KAZAL"/>
    <property type="match status" value="1"/>
</dbReference>
<dbReference type="SUPFAM" id="SSF100895">
    <property type="entry name" value="Kazal-type serine protease inhibitors"/>
    <property type="match status" value="1"/>
</dbReference>
<dbReference type="PROSITE" id="PS00282">
    <property type="entry name" value="KAZAL_1"/>
    <property type="match status" value="1"/>
</dbReference>
<dbReference type="PROSITE" id="PS51465">
    <property type="entry name" value="KAZAL_2"/>
    <property type="match status" value="1"/>
</dbReference>
<name>IOVO_AIXSP</name>
<keyword id="KW-0903">Direct protein sequencing</keyword>
<keyword id="KW-1015">Disulfide bond</keyword>
<keyword id="KW-0325">Glycoprotein</keyword>
<keyword id="KW-0646">Protease inhibitor</keyword>
<keyword id="KW-0677">Repeat</keyword>
<keyword id="KW-0964">Secreted</keyword>
<keyword id="KW-0722">Serine protease inhibitor</keyword>
<evidence type="ECO:0000255" key="1">
    <source>
        <dbReference type="PROSITE-ProRule" id="PRU00798"/>
    </source>
</evidence>
<proteinExistence type="evidence at protein level"/>
<feature type="chain" id="PRO_0000073051" description="Ovomucoid">
    <location>
        <begin position="1" status="less than"/>
        <end position="54" status="greater than"/>
    </location>
</feature>
<feature type="domain" description="Kazal-like" evidence="1">
    <location>
        <begin position="4"/>
        <end position="54"/>
    </location>
</feature>
<feature type="site" description="Reactive bond 3">
    <location>
        <begin position="16"/>
        <end position="17"/>
    </location>
</feature>
<feature type="glycosylation site" description="N-linked (GlcNAc...) asparagine">
    <location>
        <position position="43"/>
    </location>
</feature>
<feature type="disulfide bond">
    <location>
        <begin position="6"/>
        <end position="36"/>
    </location>
</feature>
<feature type="disulfide bond">
    <location>
        <begin position="14"/>
        <end position="33"/>
    </location>
</feature>
<feature type="disulfide bond">
    <location>
        <begin position="22"/>
        <end position="54"/>
    </location>
</feature>
<feature type="non-terminal residue">
    <location>
        <position position="1"/>
    </location>
</feature>
<feature type="non-terminal residue">
    <location>
        <position position="54"/>
    </location>
</feature>